<protein>
    <recommendedName>
        <fullName evidence="1">ATP phosphoribosyltransferase</fullName>
        <shortName evidence="1">ATP-PRT</shortName>
        <shortName evidence="1">ATP-PRTase</shortName>
        <ecNumber evidence="1">2.4.2.17</ecNumber>
    </recommendedName>
</protein>
<gene>
    <name evidence="1" type="primary">hisG</name>
    <name type="ordered locus">SCH_2081</name>
</gene>
<feature type="chain" id="PRO_1000004496" description="ATP phosphoribosyltransferase">
    <location>
        <begin position="1"/>
        <end position="299"/>
    </location>
</feature>
<organism>
    <name type="scientific">Salmonella choleraesuis (strain SC-B67)</name>
    <dbReference type="NCBI Taxonomy" id="321314"/>
    <lineage>
        <taxon>Bacteria</taxon>
        <taxon>Pseudomonadati</taxon>
        <taxon>Pseudomonadota</taxon>
        <taxon>Gammaproteobacteria</taxon>
        <taxon>Enterobacterales</taxon>
        <taxon>Enterobacteriaceae</taxon>
        <taxon>Salmonella</taxon>
    </lineage>
</organism>
<dbReference type="EC" id="2.4.2.17" evidence="1"/>
<dbReference type="EMBL" id="AE017220">
    <property type="protein sequence ID" value="AAX65987.1"/>
    <property type="molecule type" value="Genomic_DNA"/>
</dbReference>
<dbReference type="RefSeq" id="WP_000886603.1">
    <property type="nucleotide sequence ID" value="NC_006905.1"/>
</dbReference>
<dbReference type="SMR" id="Q57MS4"/>
<dbReference type="KEGG" id="sec:SCH_2081"/>
<dbReference type="HOGENOM" id="CLU_038115_1_0_6"/>
<dbReference type="UniPathway" id="UPA00031">
    <property type="reaction ID" value="UER00006"/>
</dbReference>
<dbReference type="Proteomes" id="UP000000538">
    <property type="component" value="Chromosome"/>
</dbReference>
<dbReference type="GO" id="GO:0005737">
    <property type="term" value="C:cytoplasm"/>
    <property type="evidence" value="ECO:0007669"/>
    <property type="project" value="UniProtKB-SubCell"/>
</dbReference>
<dbReference type="GO" id="GO:0005524">
    <property type="term" value="F:ATP binding"/>
    <property type="evidence" value="ECO:0007669"/>
    <property type="project" value="UniProtKB-KW"/>
</dbReference>
<dbReference type="GO" id="GO:0003879">
    <property type="term" value="F:ATP phosphoribosyltransferase activity"/>
    <property type="evidence" value="ECO:0007669"/>
    <property type="project" value="UniProtKB-UniRule"/>
</dbReference>
<dbReference type="GO" id="GO:0000287">
    <property type="term" value="F:magnesium ion binding"/>
    <property type="evidence" value="ECO:0007669"/>
    <property type="project" value="UniProtKB-UniRule"/>
</dbReference>
<dbReference type="GO" id="GO:0000105">
    <property type="term" value="P:L-histidine biosynthetic process"/>
    <property type="evidence" value="ECO:0007669"/>
    <property type="project" value="UniProtKB-UniRule"/>
</dbReference>
<dbReference type="CDD" id="cd13592">
    <property type="entry name" value="PBP2_HisGL2"/>
    <property type="match status" value="1"/>
</dbReference>
<dbReference type="FunFam" id="3.30.70.120:FF:000002">
    <property type="entry name" value="ATP phosphoribosyltransferase"/>
    <property type="match status" value="1"/>
</dbReference>
<dbReference type="FunFam" id="3.40.190.10:FF:000008">
    <property type="entry name" value="ATP phosphoribosyltransferase"/>
    <property type="match status" value="1"/>
</dbReference>
<dbReference type="Gene3D" id="3.30.70.120">
    <property type="match status" value="1"/>
</dbReference>
<dbReference type="Gene3D" id="3.40.190.10">
    <property type="entry name" value="Periplasmic binding protein-like II"/>
    <property type="match status" value="2"/>
</dbReference>
<dbReference type="HAMAP" id="MF_00079">
    <property type="entry name" value="HisG_Long"/>
    <property type="match status" value="1"/>
</dbReference>
<dbReference type="InterPro" id="IPR020621">
    <property type="entry name" value="ATP-PRT_HisG_long"/>
</dbReference>
<dbReference type="InterPro" id="IPR013820">
    <property type="entry name" value="ATP_PRibTrfase_cat"/>
</dbReference>
<dbReference type="InterPro" id="IPR018198">
    <property type="entry name" value="ATP_PRibTrfase_CS"/>
</dbReference>
<dbReference type="InterPro" id="IPR001348">
    <property type="entry name" value="ATP_PRibTrfase_HisG"/>
</dbReference>
<dbReference type="InterPro" id="IPR013115">
    <property type="entry name" value="HisG_C"/>
</dbReference>
<dbReference type="InterPro" id="IPR011322">
    <property type="entry name" value="N-reg_PII-like_a/b"/>
</dbReference>
<dbReference type="InterPro" id="IPR015867">
    <property type="entry name" value="N-reg_PII/ATP_PRibTrfase_C"/>
</dbReference>
<dbReference type="NCBIfam" id="TIGR00070">
    <property type="entry name" value="hisG"/>
    <property type="match status" value="1"/>
</dbReference>
<dbReference type="NCBIfam" id="TIGR03455">
    <property type="entry name" value="HisG_C-term"/>
    <property type="match status" value="1"/>
</dbReference>
<dbReference type="PANTHER" id="PTHR21403:SF8">
    <property type="entry name" value="ATP PHOSPHORIBOSYLTRANSFERASE"/>
    <property type="match status" value="1"/>
</dbReference>
<dbReference type="PANTHER" id="PTHR21403">
    <property type="entry name" value="ATP PHOSPHORIBOSYLTRANSFERASE ATP-PRTASE"/>
    <property type="match status" value="1"/>
</dbReference>
<dbReference type="Pfam" id="PF01634">
    <property type="entry name" value="HisG"/>
    <property type="match status" value="1"/>
</dbReference>
<dbReference type="Pfam" id="PF08029">
    <property type="entry name" value="HisG_C"/>
    <property type="match status" value="1"/>
</dbReference>
<dbReference type="SUPFAM" id="SSF54913">
    <property type="entry name" value="GlnB-like"/>
    <property type="match status" value="1"/>
</dbReference>
<dbReference type="SUPFAM" id="SSF53850">
    <property type="entry name" value="Periplasmic binding protein-like II"/>
    <property type="match status" value="1"/>
</dbReference>
<dbReference type="PROSITE" id="PS01316">
    <property type="entry name" value="ATP_P_PHORIBOSYLTR"/>
    <property type="match status" value="1"/>
</dbReference>
<name>HIS1_SALCH</name>
<keyword id="KW-0028">Amino-acid biosynthesis</keyword>
<keyword id="KW-0067">ATP-binding</keyword>
<keyword id="KW-0963">Cytoplasm</keyword>
<keyword id="KW-0328">Glycosyltransferase</keyword>
<keyword id="KW-0368">Histidine biosynthesis</keyword>
<keyword id="KW-0460">Magnesium</keyword>
<keyword id="KW-0479">Metal-binding</keyword>
<keyword id="KW-0547">Nucleotide-binding</keyword>
<keyword id="KW-0808">Transferase</keyword>
<proteinExistence type="inferred from homology"/>
<comment type="function">
    <text evidence="1">Catalyzes the condensation of ATP and 5-phosphoribose 1-diphosphate to form N'-(5'-phosphoribosyl)-ATP (PR-ATP). Has a crucial role in the pathway because the rate of histidine biosynthesis seems to be controlled primarily by regulation of HisG enzymatic activity.</text>
</comment>
<comment type="catalytic activity">
    <reaction evidence="1">
        <text>1-(5-phospho-beta-D-ribosyl)-ATP + diphosphate = 5-phospho-alpha-D-ribose 1-diphosphate + ATP</text>
        <dbReference type="Rhea" id="RHEA:18473"/>
        <dbReference type="ChEBI" id="CHEBI:30616"/>
        <dbReference type="ChEBI" id="CHEBI:33019"/>
        <dbReference type="ChEBI" id="CHEBI:58017"/>
        <dbReference type="ChEBI" id="CHEBI:73183"/>
        <dbReference type="EC" id="2.4.2.17"/>
    </reaction>
</comment>
<comment type="cofactor">
    <cofactor evidence="1">
        <name>Mg(2+)</name>
        <dbReference type="ChEBI" id="CHEBI:18420"/>
    </cofactor>
</comment>
<comment type="activity regulation">
    <text evidence="1">Feedback inhibited by histidine.</text>
</comment>
<comment type="pathway">
    <text evidence="1">Amino-acid biosynthesis; L-histidine biosynthesis; L-histidine from 5-phospho-alpha-D-ribose 1-diphosphate: step 1/9.</text>
</comment>
<comment type="subunit">
    <text evidence="1">Equilibrium between an active dimeric form, an inactive hexameric form and higher aggregates. Interconversion between the various forms is largely reversible and is influenced by the natural substrates and inhibitors of the enzyme.</text>
</comment>
<comment type="subcellular location">
    <subcellularLocation>
        <location evidence="1">Cytoplasm</location>
    </subcellularLocation>
</comment>
<comment type="similarity">
    <text evidence="1">Belongs to the ATP phosphoribosyltransferase family. Long subfamily.</text>
</comment>
<reference key="1">
    <citation type="journal article" date="2005" name="Nucleic Acids Res.">
        <title>The genome sequence of Salmonella enterica serovar Choleraesuis, a highly invasive and resistant zoonotic pathogen.</title>
        <authorList>
            <person name="Chiu C.-H."/>
            <person name="Tang P."/>
            <person name="Chu C."/>
            <person name="Hu S."/>
            <person name="Bao Q."/>
            <person name="Yu J."/>
            <person name="Chou Y.-Y."/>
            <person name="Wang H.-S."/>
            <person name="Lee Y.-S."/>
        </authorList>
    </citation>
    <scope>NUCLEOTIDE SEQUENCE [LARGE SCALE GENOMIC DNA]</scope>
    <source>
        <strain>SC-B67</strain>
    </source>
</reference>
<accession>Q57MS4</accession>
<sequence length="299" mass="33212">MLDNTRLRIAIQKSGRLSDDSRELLARCGIKINLHTQRLIAMAENMPIDILRVRDDDIPGLVMDGVVDLGIIGENVLEEELLNRRAQGEDPRYLTLRRLDFGGCRLSLATPVDEAWDGPAALDGKRIATSYPHLLKRYLDQKGVSFKSCLLNGSVEVAPRAGLADAICDLVSTGATLEANGLREVEVIYRSKACLIQRDGEMAQSKQELIDKLLTRIQGVIQARESKYIMMHAPSERLEEVIALLPGAERPTILPLAGEQQRVAMHMVSSETLFWETMEKLKALGASSILVLPIEKMME</sequence>
<evidence type="ECO:0000255" key="1">
    <source>
        <dbReference type="HAMAP-Rule" id="MF_00079"/>
    </source>
</evidence>